<evidence type="ECO:0000255" key="1">
    <source>
        <dbReference type="HAMAP-Rule" id="MF_01350"/>
    </source>
</evidence>
<organism>
    <name type="scientific">Ranunculus macranthus</name>
    <name type="common">Large buttercup</name>
    <dbReference type="NCBI Taxonomy" id="334596"/>
    <lineage>
        <taxon>Eukaryota</taxon>
        <taxon>Viridiplantae</taxon>
        <taxon>Streptophyta</taxon>
        <taxon>Embryophyta</taxon>
        <taxon>Tracheophyta</taxon>
        <taxon>Spermatophyta</taxon>
        <taxon>Magnoliopsida</taxon>
        <taxon>Ranunculales</taxon>
        <taxon>Ranunculaceae</taxon>
        <taxon>Ranunculoideae</taxon>
        <taxon>Ranunculeae</taxon>
        <taxon>Ranunculus</taxon>
    </lineage>
</organism>
<accession>A1XGT6</accession>
<geneLocation type="chloroplast"/>
<sequence>MIIDTTKLQAINSFYRSESLKEVYGLVWLLIPIFILVLGIVIGVLVIVWLERQISAGVQQRIGPEYAGPLGILQALADGTKLLFKEDLLPSRGDIYLFSIGPSIAVIAILLSYLVIPFGYHLVLADLSIGVFLWIAISSIAPIGLLMSGYGSNNKYSFLGGLRAAAQSISYEIPLTPCVLSISLLSNSSSTVDIVEAQAKYGFWGWNLWRQPIGFTVFFISSLAECERLPFDLPEAEEELVAGYQTEYSGIKFGLFYVASYLNLLVSSLFVTVLYLGGWNLSIPHILIPELFGINEMGGVFGMTIGIFITLAKAYLFLFISITTRWTLPRMRMDQLLNLGWKFLLPISLGNLLLTTSFQLFSL</sequence>
<gene>
    <name evidence="1" type="primary">ndhA</name>
</gene>
<comment type="function">
    <text evidence="1">NDH shuttles electrons from NAD(P)H:plastoquinone, via FMN and iron-sulfur (Fe-S) centers, to quinones in the photosynthetic chain and possibly in a chloroplast respiratory chain. The immediate electron acceptor for the enzyme in this species is believed to be plastoquinone. Couples the redox reaction to proton translocation, and thus conserves the redox energy in a proton gradient.</text>
</comment>
<comment type="catalytic activity">
    <reaction evidence="1">
        <text>a plastoquinone + NADH + (n+1) H(+)(in) = a plastoquinol + NAD(+) + n H(+)(out)</text>
        <dbReference type="Rhea" id="RHEA:42608"/>
        <dbReference type="Rhea" id="RHEA-COMP:9561"/>
        <dbReference type="Rhea" id="RHEA-COMP:9562"/>
        <dbReference type="ChEBI" id="CHEBI:15378"/>
        <dbReference type="ChEBI" id="CHEBI:17757"/>
        <dbReference type="ChEBI" id="CHEBI:57540"/>
        <dbReference type="ChEBI" id="CHEBI:57945"/>
        <dbReference type="ChEBI" id="CHEBI:62192"/>
    </reaction>
</comment>
<comment type="catalytic activity">
    <reaction evidence="1">
        <text>a plastoquinone + NADPH + (n+1) H(+)(in) = a plastoquinol + NADP(+) + n H(+)(out)</text>
        <dbReference type="Rhea" id="RHEA:42612"/>
        <dbReference type="Rhea" id="RHEA-COMP:9561"/>
        <dbReference type="Rhea" id="RHEA-COMP:9562"/>
        <dbReference type="ChEBI" id="CHEBI:15378"/>
        <dbReference type="ChEBI" id="CHEBI:17757"/>
        <dbReference type="ChEBI" id="CHEBI:57783"/>
        <dbReference type="ChEBI" id="CHEBI:58349"/>
        <dbReference type="ChEBI" id="CHEBI:62192"/>
    </reaction>
</comment>
<comment type="subunit">
    <text evidence="1">NDH is composed of at least 16 different subunits, 5 of which are encoded in the nucleus.</text>
</comment>
<comment type="subcellular location">
    <subcellularLocation>
        <location evidence="1">Plastid</location>
        <location evidence="1">Chloroplast thylakoid membrane</location>
        <topology evidence="1">Multi-pass membrane protein</topology>
    </subcellularLocation>
</comment>
<comment type="similarity">
    <text evidence="1">Belongs to the complex I subunit 1 family.</text>
</comment>
<proteinExistence type="inferred from homology"/>
<keyword id="KW-0150">Chloroplast</keyword>
<keyword id="KW-0472">Membrane</keyword>
<keyword id="KW-0520">NAD</keyword>
<keyword id="KW-0521">NADP</keyword>
<keyword id="KW-0934">Plastid</keyword>
<keyword id="KW-0618">Plastoquinone</keyword>
<keyword id="KW-0874">Quinone</keyword>
<keyword id="KW-0793">Thylakoid</keyword>
<keyword id="KW-1278">Translocase</keyword>
<keyword id="KW-0812">Transmembrane</keyword>
<keyword id="KW-1133">Transmembrane helix</keyword>
<protein>
    <recommendedName>
        <fullName evidence="1">NAD(P)H-quinone oxidoreductase subunit 1, chloroplastic</fullName>
        <ecNumber evidence="1">7.1.1.-</ecNumber>
    </recommendedName>
    <alternativeName>
        <fullName evidence="1">NAD(P)H dehydrogenase subunit 1</fullName>
        <shortName evidence="1">NDH subunit 1</shortName>
    </alternativeName>
    <alternativeName>
        <fullName evidence="1">NADH-plastoquinone oxidoreductase subunit 1</fullName>
    </alternativeName>
</protein>
<name>NU1C_RANMC</name>
<feature type="chain" id="PRO_0000298881" description="NAD(P)H-quinone oxidoreductase subunit 1, chloroplastic">
    <location>
        <begin position="1"/>
        <end position="363"/>
    </location>
</feature>
<feature type="transmembrane region" description="Helical" evidence="1">
    <location>
        <begin position="27"/>
        <end position="47"/>
    </location>
</feature>
<feature type="transmembrane region" description="Helical" evidence="1">
    <location>
        <begin position="104"/>
        <end position="124"/>
    </location>
</feature>
<feature type="transmembrane region" description="Helical" evidence="1">
    <location>
        <begin position="127"/>
        <end position="147"/>
    </location>
</feature>
<feature type="transmembrane region" description="Helical" evidence="1">
    <location>
        <begin position="248"/>
        <end position="268"/>
    </location>
</feature>
<feature type="transmembrane region" description="Helical" evidence="1">
    <location>
        <begin position="300"/>
        <end position="320"/>
    </location>
</feature>
<feature type="transmembrane region" description="Helical" evidence="1">
    <location>
        <begin position="343"/>
        <end position="363"/>
    </location>
</feature>
<dbReference type="EC" id="7.1.1.-" evidence="1"/>
<dbReference type="EMBL" id="DQ359689">
    <property type="protein sequence ID" value="ABC70804.1"/>
    <property type="molecule type" value="Genomic_DNA"/>
</dbReference>
<dbReference type="RefSeq" id="YP_001004234.1">
    <property type="nucleotide sequence ID" value="NC_008796.1"/>
</dbReference>
<dbReference type="SMR" id="A1XGT6"/>
<dbReference type="GeneID" id="4712186"/>
<dbReference type="GO" id="GO:0009535">
    <property type="term" value="C:chloroplast thylakoid membrane"/>
    <property type="evidence" value="ECO:0007669"/>
    <property type="project" value="UniProtKB-SubCell"/>
</dbReference>
<dbReference type="GO" id="GO:0003954">
    <property type="term" value="F:NADH dehydrogenase activity"/>
    <property type="evidence" value="ECO:0007669"/>
    <property type="project" value="TreeGrafter"/>
</dbReference>
<dbReference type="GO" id="GO:0016655">
    <property type="term" value="F:oxidoreductase activity, acting on NAD(P)H, quinone or similar compound as acceptor"/>
    <property type="evidence" value="ECO:0007669"/>
    <property type="project" value="UniProtKB-UniRule"/>
</dbReference>
<dbReference type="GO" id="GO:0048038">
    <property type="term" value="F:quinone binding"/>
    <property type="evidence" value="ECO:0007669"/>
    <property type="project" value="UniProtKB-KW"/>
</dbReference>
<dbReference type="GO" id="GO:0009060">
    <property type="term" value="P:aerobic respiration"/>
    <property type="evidence" value="ECO:0007669"/>
    <property type="project" value="TreeGrafter"/>
</dbReference>
<dbReference type="GO" id="GO:0019684">
    <property type="term" value="P:photosynthesis, light reaction"/>
    <property type="evidence" value="ECO:0007669"/>
    <property type="project" value="UniProtKB-UniRule"/>
</dbReference>
<dbReference type="HAMAP" id="MF_01350">
    <property type="entry name" value="NDH1_NuoH"/>
    <property type="match status" value="1"/>
</dbReference>
<dbReference type="InterPro" id="IPR001694">
    <property type="entry name" value="NADH_UbQ_OxRdtase_su1/FPO"/>
</dbReference>
<dbReference type="InterPro" id="IPR018086">
    <property type="entry name" value="NADH_UbQ_OxRdtase_su1_CS"/>
</dbReference>
<dbReference type="NCBIfam" id="NF004741">
    <property type="entry name" value="PRK06076.1-2"/>
    <property type="match status" value="1"/>
</dbReference>
<dbReference type="PANTHER" id="PTHR11432">
    <property type="entry name" value="NADH DEHYDROGENASE SUBUNIT 1"/>
    <property type="match status" value="1"/>
</dbReference>
<dbReference type="PANTHER" id="PTHR11432:SF3">
    <property type="entry name" value="NADH-UBIQUINONE OXIDOREDUCTASE CHAIN 1"/>
    <property type="match status" value="1"/>
</dbReference>
<dbReference type="Pfam" id="PF00146">
    <property type="entry name" value="NADHdh"/>
    <property type="match status" value="1"/>
</dbReference>
<dbReference type="PROSITE" id="PS00667">
    <property type="entry name" value="COMPLEX1_ND1_1"/>
    <property type="match status" value="1"/>
</dbReference>
<dbReference type="PROSITE" id="PS00668">
    <property type="entry name" value="COMPLEX1_ND1_2"/>
    <property type="match status" value="1"/>
</dbReference>
<reference key="1">
    <citation type="journal article" date="2007" name="BMC Genomics">
        <title>Comparative chloroplast genomics: analyses including new sequences from the angiosperms Nuphar advena and Ranunculus macranthus.</title>
        <authorList>
            <person name="Raubeson L.A."/>
            <person name="Peery R."/>
            <person name="Chumley T.W."/>
            <person name="Dziubek C."/>
            <person name="Fourcade H.M."/>
            <person name="Boore J.L."/>
            <person name="Jansen R.K."/>
        </authorList>
    </citation>
    <scope>NUCLEOTIDE SEQUENCE [LARGE SCALE GENOMIC DNA]</scope>
</reference>